<organism>
    <name type="scientific">Capra hircus</name>
    <name type="common">Goat</name>
    <dbReference type="NCBI Taxonomy" id="9925"/>
    <lineage>
        <taxon>Eukaryota</taxon>
        <taxon>Metazoa</taxon>
        <taxon>Chordata</taxon>
        <taxon>Craniata</taxon>
        <taxon>Vertebrata</taxon>
        <taxon>Euteleostomi</taxon>
        <taxon>Mammalia</taxon>
        <taxon>Eutheria</taxon>
        <taxon>Laurasiatheria</taxon>
        <taxon>Artiodactyla</taxon>
        <taxon>Ruminantia</taxon>
        <taxon>Pecora</taxon>
        <taxon>Bovidae</taxon>
        <taxon>Caprinae</taxon>
        <taxon>Capra</taxon>
    </lineage>
</organism>
<keyword id="KW-0106">Calcium</keyword>
<keyword id="KW-0325">Glycoprotein</keyword>
<keyword id="KW-0333">Golgi apparatus</keyword>
<keyword id="KW-0479">Metal-binding</keyword>
<keyword id="KW-0597">Phosphoprotein</keyword>
<keyword id="KW-1185">Reference proteome</keyword>
<keyword id="KW-0677">Repeat</keyword>
<keyword id="KW-0732">Signal</keyword>
<proteinExistence type="evidence at transcript level"/>
<gene>
    <name type="primary">SDF4</name>
    <name type="synonym">CAB45</name>
</gene>
<dbReference type="EMBL" id="EF589950">
    <property type="protein sequence ID" value="ABQ59236.1"/>
    <property type="molecule type" value="mRNA"/>
</dbReference>
<dbReference type="RefSeq" id="NP_001272572.1">
    <property type="nucleotide sequence ID" value="NM_001285643.1"/>
</dbReference>
<dbReference type="STRING" id="9925.ENSCHIP00000011612"/>
<dbReference type="GlyCosmos" id="A5YVD9">
    <property type="glycosylation" value="1 site, No reported glycans"/>
</dbReference>
<dbReference type="GeneID" id="100860787"/>
<dbReference type="KEGG" id="chx:100860787"/>
<dbReference type="CTD" id="51150"/>
<dbReference type="OrthoDB" id="9978834at2759"/>
<dbReference type="Proteomes" id="UP000291000">
    <property type="component" value="Unassembled WGS sequence"/>
</dbReference>
<dbReference type="Proteomes" id="UP000694566">
    <property type="component" value="Unplaced"/>
</dbReference>
<dbReference type="GO" id="GO:0005783">
    <property type="term" value="C:endoplasmic reticulum"/>
    <property type="evidence" value="ECO:0007669"/>
    <property type="project" value="TreeGrafter"/>
</dbReference>
<dbReference type="GO" id="GO:0005796">
    <property type="term" value="C:Golgi lumen"/>
    <property type="evidence" value="ECO:0007669"/>
    <property type="project" value="UniProtKB-SubCell"/>
</dbReference>
<dbReference type="GO" id="GO:0005509">
    <property type="term" value="F:calcium ion binding"/>
    <property type="evidence" value="ECO:0007669"/>
    <property type="project" value="InterPro"/>
</dbReference>
<dbReference type="GO" id="GO:0017156">
    <property type="term" value="P:calcium-ion regulated exocytosis"/>
    <property type="evidence" value="ECO:0007669"/>
    <property type="project" value="TreeGrafter"/>
</dbReference>
<dbReference type="CDD" id="cd16225">
    <property type="entry name" value="EFh_CREC_cab45"/>
    <property type="match status" value="1"/>
</dbReference>
<dbReference type="FunFam" id="1.10.238.10:FF:000120">
    <property type="entry name" value="45 kDa calcium-binding protein"/>
    <property type="match status" value="1"/>
</dbReference>
<dbReference type="FunFam" id="1.10.238.10:FF:000207">
    <property type="entry name" value="Putative 45 kDa calcium-binding protein"/>
    <property type="match status" value="1"/>
</dbReference>
<dbReference type="Gene3D" id="1.10.238.10">
    <property type="entry name" value="EF-hand"/>
    <property type="match status" value="3"/>
</dbReference>
<dbReference type="InterPro" id="IPR027240">
    <property type="entry name" value="CAB45_EFh"/>
</dbReference>
<dbReference type="InterPro" id="IPR011992">
    <property type="entry name" value="EF-hand-dom_pair"/>
</dbReference>
<dbReference type="InterPro" id="IPR018247">
    <property type="entry name" value="EF_Hand_1_Ca_BS"/>
</dbReference>
<dbReference type="InterPro" id="IPR002048">
    <property type="entry name" value="EF_hand_dom"/>
</dbReference>
<dbReference type="PANTHER" id="PTHR10827:SF98">
    <property type="entry name" value="45 KDA CALCIUM-BINDING PROTEIN"/>
    <property type="match status" value="1"/>
</dbReference>
<dbReference type="PANTHER" id="PTHR10827">
    <property type="entry name" value="RETICULOCALBIN"/>
    <property type="match status" value="1"/>
</dbReference>
<dbReference type="Pfam" id="PF13499">
    <property type="entry name" value="EF-hand_7"/>
    <property type="match status" value="1"/>
</dbReference>
<dbReference type="SMART" id="SM00054">
    <property type="entry name" value="EFh"/>
    <property type="match status" value="5"/>
</dbReference>
<dbReference type="SUPFAM" id="SSF47473">
    <property type="entry name" value="EF-hand"/>
    <property type="match status" value="2"/>
</dbReference>
<dbReference type="PROSITE" id="PS00018">
    <property type="entry name" value="EF_HAND_1"/>
    <property type="match status" value="5"/>
</dbReference>
<dbReference type="PROSITE" id="PS50222">
    <property type="entry name" value="EF_HAND_2"/>
    <property type="match status" value="5"/>
</dbReference>
<feature type="signal peptide" evidence="4">
    <location>
        <begin position="1"/>
        <end position="29"/>
    </location>
</feature>
<feature type="chain" id="PRO_0000377516" description="45 kDa calcium-binding protein">
    <location>
        <begin position="30"/>
        <end position="355"/>
    </location>
</feature>
<feature type="domain" description="EF-hand 1" evidence="5">
    <location>
        <begin position="91"/>
        <end position="126"/>
    </location>
</feature>
<feature type="domain" description="EF-hand 2" evidence="5">
    <location>
        <begin position="130"/>
        <end position="165"/>
    </location>
</feature>
<feature type="domain" description="EF-hand 3" evidence="5">
    <location>
        <begin position="226"/>
        <end position="261"/>
    </location>
</feature>
<feature type="domain" description="EF-hand 4" evidence="5">
    <location>
        <begin position="271"/>
        <end position="306"/>
    </location>
</feature>
<feature type="domain" description="EF-hand 5" evidence="5">
    <location>
        <begin position="307"/>
        <end position="342"/>
    </location>
</feature>
<feature type="region of interest" description="Necessary for intracellular retention in Golgi apparatus lumen" evidence="1">
    <location>
        <begin position="302"/>
        <end position="355"/>
    </location>
</feature>
<feature type="binding site" evidence="5">
    <location>
        <position position="104"/>
    </location>
    <ligand>
        <name>Ca(2+)</name>
        <dbReference type="ChEBI" id="CHEBI:29108"/>
        <label>1</label>
    </ligand>
</feature>
<feature type="binding site" evidence="5">
    <location>
        <position position="106"/>
    </location>
    <ligand>
        <name>Ca(2+)</name>
        <dbReference type="ChEBI" id="CHEBI:29108"/>
        <label>1</label>
    </ligand>
</feature>
<feature type="binding site" evidence="5">
    <location>
        <position position="108"/>
    </location>
    <ligand>
        <name>Ca(2+)</name>
        <dbReference type="ChEBI" id="CHEBI:29108"/>
        <label>1</label>
    </ligand>
</feature>
<feature type="binding site" evidence="5">
    <location>
        <position position="110"/>
    </location>
    <ligand>
        <name>Ca(2+)</name>
        <dbReference type="ChEBI" id="CHEBI:29108"/>
        <label>1</label>
    </ligand>
</feature>
<feature type="binding site" evidence="5">
    <location>
        <position position="115"/>
    </location>
    <ligand>
        <name>Ca(2+)</name>
        <dbReference type="ChEBI" id="CHEBI:29108"/>
        <label>1</label>
    </ligand>
</feature>
<feature type="binding site" evidence="5">
    <location>
        <position position="143"/>
    </location>
    <ligand>
        <name>Ca(2+)</name>
        <dbReference type="ChEBI" id="CHEBI:29108"/>
        <label>2</label>
    </ligand>
</feature>
<feature type="binding site" evidence="5">
    <location>
        <position position="145"/>
    </location>
    <ligand>
        <name>Ca(2+)</name>
        <dbReference type="ChEBI" id="CHEBI:29108"/>
        <label>2</label>
    </ligand>
</feature>
<feature type="binding site" evidence="5">
    <location>
        <position position="147"/>
    </location>
    <ligand>
        <name>Ca(2+)</name>
        <dbReference type="ChEBI" id="CHEBI:29108"/>
        <label>2</label>
    </ligand>
</feature>
<feature type="binding site" evidence="5">
    <location>
        <position position="149"/>
    </location>
    <ligand>
        <name>Ca(2+)</name>
        <dbReference type="ChEBI" id="CHEBI:29108"/>
        <label>2</label>
    </ligand>
</feature>
<feature type="binding site" evidence="5">
    <location>
        <position position="154"/>
    </location>
    <ligand>
        <name>Ca(2+)</name>
        <dbReference type="ChEBI" id="CHEBI:29108"/>
        <label>2</label>
    </ligand>
</feature>
<feature type="binding site" evidence="5">
    <location>
        <position position="239"/>
    </location>
    <ligand>
        <name>Ca(2+)</name>
        <dbReference type="ChEBI" id="CHEBI:29108"/>
        <label>3</label>
    </ligand>
</feature>
<feature type="binding site" evidence="5">
    <location>
        <position position="241"/>
    </location>
    <ligand>
        <name>Ca(2+)</name>
        <dbReference type="ChEBI" id="CHEBI:29108"/>
        <label>3</label>
    </ligand>
</feature>
<feature type="binding site" evidence="5">
    <location>
        <position position="243"/>
    </location>
    <ligand>
        <name>Ca(2+)</name>
        <dbReference type="ChEBI" id="CHEBI:29108"/>
        <label>3</label>
    </ligand>
</feature>
<feature type="binding site" evidence="5">
    <location>
        <position position="245"/>
    </location>
    <ligand>
        <name>Ca(2+)</name>
        <dbReference type="ChEBI" id="CHEBI:29108"/>
        <label>3</label>
    </ligand>
</feature>
<feature type="binding site" evidence="5">
    <location>
        <position position="250"/>
    </location>
    <ligand>
        <name>Ca(2+)</name>
        <dbReference type="ChEBI" id="CHEBI:29108"/>
        <label>3</label>
    </ligand>
</feature>
<feature type="binding site" evidence="5">
    <location>
        <position position="284"/>
    </location>
    <ligand>
        <name>Ca(2+)</name>
        <dbReference type="ChEBI" id="CHEBI:29108"/>
        <label>4</label>
    </ligand>
</feature>
<feature type="binding site" evidence="5">
    <location>
        <position position="286"/>
    </location>
    <ligand>
        <name>Ca(2+)</name>
        <dbReference type="ChEBI" id="CHEBI:29108"/>
        <label>4</label>
    </ligand>
</feature>
<feature type="binding site" evidence="5">
    <location>
        <position position="288"/>
    </location>
    <ligand>
        <name>Ca(2+)</name>
        <dbReference type="ChEBI" id="CHEBI:29108"/>
        <label>4</label>
    </ligand>
</feature>
<feature type="binding site" evidence="5">
    <location>
        <position position="295"/>
    </location>
    <ligand>
        <name>Ca(2+)</name>
        <dbReference type="ChEBI" id="CHEBI:29108"/>
        <label>4</label>
    </ligand>
</feature>
<feature type="binding site" evidence="5">
    <location>
        <position position="320"/>
    </location>
    <ligand>
        <name>Ca(2+)</name>
        <dbReference type="ChEBI" id="CHEBI:29108"/>
        <label>5</label>
    </ligand>
</feature>
<feature type="binding site" evidence="5">
    <location>
        <position position="322"/>
    </location>
    <ligand>
        <name>Ca(2+)</name>
        <dbReference type="ChEBI" id="CHEBI:29108"/>
        <label>5</label>
    </ligand>
</feature>
<feature type="binding site" evidence="5">
    <location>
        <position position="324"/>
    </location>
    <ligand>
        <name>Ca(2+)</name>
        <dbReference type="ChEBI" id="CHEBI:29108"/>
        <label>5</label>
    </ligand>
</feature>
<feature type="binding site" evidence="5">
    <location>
        <position position="326"/>
    </location>
    <ligand>
        <name>Ca(2+)</name>
        <dbReference type="ChEBI" id="CHEBI:29108"/>
        <label>5</label>
    </ligand>
</feature>
<feature type="binding site" evidence="5">
    <location>
        <position position="331"/>
    </location>
    <ligand>
        <name>Ca(2+)</name>
        <dbReference type="ChEBI" id="CHEBI:29108"/>
        <label>5</label>
    </ligand>
</feature>
<feature type="modified residue" description="Phosphoserine" evidence="3">
    <location>
        <position position="92"/>
    </location>
</feature>
<feature type="modified residue" description="Phosphothreonine" evidence="3">
    <location>
        <position position="186"/>
    </location>
</feature>
<feature type="modified residue" description="Phosphothreonine" evidence="3">
    <location>
        <position position="210"/>
    </location>
</feature>
<feature type="modified residue" description="Phosphothreonine" evidence="3">
    <location>
        <position position="258"/>
    </location>
</feature>
<feature type="modified residue" description="Phosphothreonine" evidence="3">
    <location>
        <position position="292"/>
    </location>
</feature>
<feature type="glycosylation site" description="N-linked (GlcNAc...) asparagine" evidence="4">
    <location>
        <position position="26"/>
    </location>
</feature>
<name>CAB45_CAPHI</name>
<reference key="1">
    <citation type="submission" date="2007-05" db="EMBL/GenBank/DDBJ databases">
        <title>Identifying and sequence analyzing of stromal cell derived factor 4 in mammary gland of Xinong Saanen goat.</title>
        <authorList>
            <person name="Luo J."/>
            <person name="Wu H.J."/>
            <person name="Zhang L.J."/>
        </authorList>
    </citation>
    <scope>NUCLEOTIDE SEQUENCE [MRNA]</scope>
    <source>
        <tissue>Mammary gland</tissue>
    </source>
</reference>
<comment type="function">
    <text evidence="1">May regulate calcium-dependent activities in the endoplasmic reticulum lumen or post-ER compartment.</text>
</comment>
<comment type="subcellular location">
    <subcellularLocation>
        <location evidence="2">Golgi apparatus lumen</location>
    </subcellularLocation>
</comment>
<comment type="domain">
    <text evidence="1">Binds calcium via its EF-hands.</text>
</comment>
<comment type="similarity">
    <text evidence="6">Belongs to the CREC family.</text>
</comment>
<evidence type="ECO:0000250" key="1"/>
<evidence type="ECO:0000250" key="2">
    <source>
        <dbReference type="UniProtKB" id="Q61112"/>
    </source>
</evidence>
<evidence type="ECO:0000250" key="3">
    <source>
        <dbReference type="UniProtKB" id="Q9BRK5"/>
    </source>
</evidence>
<evidence type="ECO:0000255" key="4"/>
<evidence type="ECO:0000255" key="5">
    <source>
        <dbReference type="PROSITE-ProRule" id="PRU00448"/>
    </source>
</evidence>
<evidence type="ECO:0000305" key="6"/>
<protein>
    <recommendedName>
        <fullName>45 kDa calcium-binding protein</fullName>
        <shortName>Cab45</shortName>
    </recommendedName>
    <alternativeName>
        <fullName>Stromal cell-derived factor 4</fullName>
        <shortName>SDF-4</shortName>
    </alternativeName>
</protein>
<sequence>MASRQGPLCGLAPCCLWLLGVILLMNASARPANHSSARERAGNREENEILPPDHLNGVKLEMDGHLNKDFHQEVFLGKDMDDFEEDAEPRKSRRKLMVIFSKVDLNTDRRISAKEMQKWIMQKTAEHFQEAVAESRAHFRAVDPDGDGHVSWDEYKVKFLATKGHNEREVAEKIKNKWDLNIDEETQEVLENLKDRWYQADNPPPDLLLTESEFLSFLHPEHSRGMLQFMVKEIIRDLDQDGDKKLSLSEFISLPVGTVENQQGQDVDDGWVRDRKREFEELIDANHDGIVTMAELEDYMDPMNEFSALNEAKQMIAIADENQNHYLEPEEVLKYSEFFTGSKLVDYARSVHEEF</sequence>
<accession>A5YVD9</accession>